<name>TRPD_BUCAT</name>
<sequence length="342" mass="38730">MRNILLKIYDSKFLNQEESYQLFTLISSGKITDIKLASILTAMKIRGESIEEITGAIKAFLDKMKYFPKPDYIFSDIVGTGGDAKNTINISTMSAFVAATCGLKIIKHCNQRISSKSGSSDILEKFNINLNASPEKSRKTLDQLNICFLFAPKYHDGFKYSNNVRTDLKTKTIFNFLGPFLNPATPPLSVIGVYNKNLINIAVNILKNLQYKRAIVLHSDNTDEVTLHGTTYVSELLNKKIISYQLQPESFGLKMHPKKILKINSLEENYHIIKEIMKGKGSKLYEELIAVNVAMLLKVFGYENLKENTKLALNKIRSGDVYKHIRNVANMLKEDNHARHNT</sequence>
<protein>
    <recommendedName>
        <fullName evidence="1">Anthranilate phosphoribosyltransferase</fullName>
        <ecNumber evidence="1">2.4.2.18</ecNumber>
    </recommendedName>
</protein>
<accession>B8D7H6</accession>
<evidence type="ECO:0000255" key="1">
    <source>
        <dbReference type="HAMAP-Rule" id="MF_00211"/>
    </source>
</evidence>
<proteinExistence type="inferred from homology"/>
<comment type="function">
    <text evidence="1">Catalyzes the transfer of the phosphoribosyl group of 5-phosphorylribose-1-pyrophosphate (PRPP) to anthranilate to yield N-(5'-phosphoribosyl)-anthranilate (PRA).</text>
</comment>
<comment type="catalytic activity">
    <reaction evidence="1">
        <text>N-(5-phospho-beta-D-ribosyl)anthranilate + diphosphate = 5-phospho-alpha-D-ribose 1-diphosphate + anthranilate</text>
        <dbReference type="Rhea" id="RHEA:11768"/>
        <dbReference type="ChEBI" id="CHEBI:16567"/>
        <dbReference type="ChEBI" id="CHEBI:18277"/>
        <dbReference type="ChEBI" id="CHEBI:33019"/>
        <dbReference type="ChEBI" id="CHEBI:58017"/>
        <dbReference type="EC" id="2.4.2.18"/>
    </reaction>
</comment>
<comment type="cofactor">
    <cofactor evidence="1">
        <name>Mg(2+)</name>
        <dbReference type="ChEBI" id="CHEBI:18420"/>
    </cofactor>
    <text evidence="1">Binds 2 magnesium ions per monomer.</text>
</comment>
<comment type="pathway">
    <text evidence="1">Amino-acid biosynthesis; L-tryptophan biosynthesis; L-tryptophan from chorismate: step 2/5.</text>
</comment>
<comment type="subunit">
    <text evidence="1">Homodimer.</text>
</comment>
<comment type="similarity">
    <text evidence="1">Belongs to the anthranilate phosphoribosyltransferase family.</text>
</comment>
<feature type="chain" id="PRO_1000198810" description="Anthranilate phosphoribosyltransferase">
    <location>
        <begin position="1"/>
        <end position="342"/>
    </location>
</feature>
<feature type="binding site" evidence="1">
    <location>
        <position position="79"/>
    </location>
    <ligand>
        <name>5-phospho-alpha-D-ribose 1-diphosphate</name>
        <dbReference type="ChEBI" id="CHEBI:58017"/>
    </ligand>
</feature>
<feature type="binding site" evidence="1">
    <location>
        <position position="79"/>
    </location>
    <ligand>
        <name>anthranilate</name>
        <dbReference type="ChEBI" id="CHEBI:16567"/>
        <label>1</label>
    </ligand>
</feature>
<feature type="binding site" evidence="1">
    <location>
        <begin position="82"/>
        <end position="83"/>
    </location>
    <ligand>
        <name>5-phospho-alpha-D-ribose 1-diphosphate</name>
        <dbReference type="ChEBI" id="CHEBI:58017"/>
    </ligand>
</feature>
<feature type="binding site" evidence="1">
    <location>
        <position position="87"/>
    </location>
    <ligand>
        <name>5-phospho-alpha-D-ribose 1-diphosphate</name>
        <dbReference type="ChEBI" id="CHEBI:58017"/>
    </ligand>
</feature>
<feature type="binding site" evidence="1">
    <location>
        <begin position="89"/>
        <end position="92"/>
    </location>
    <ligand>
        <name>5-phospho-alpha-D-ribose 1-diphosphate</name>
        <dbReference type="ChEBI" id="CHEBI:58017"/>
    </ligand>
</feature>
<feature type="binding site" evidence="1">
    <location>
        <position position="91"/>
    </location>
    <ligand>
        <name>Mg(2+)</name>
        <dbReference type="ChEBI" id="CHEBI:18420"/>
        <label>1</label>
    </ligand>
</feature>
<feature type="binding site" evidence="1">
    <location>
        <begin position="107"/>
        <end position="115"/>
    </location>
    <ligand>
        <name>5-phospho-alpha-D-ribose 1-diphosphate</name>
        <dbReference type="ChEBI" id="CHEBI:58017"/>
    </ligand>
</feature>
<feature type="binding site" evidence="1">
    <location>
        <position position="110"/>
    </location>
    <ligand>
        <name>anthranilate</name>
        <dbReference type="ChEBI" id="CHEBI:16567"/>
        <label>1</label>
    </ligand>
</feature>
<feature type="binding site" evidence="1">
    <location>
        <position position="119"/>
    </location>
    <ligand>
        <name>5-phospho-alpha-D-ribose 1-diphosphate</name>
        <dbReference type="ChEBI" id="CHEBI:58017"/>
    </ligand>
</feature>
<feature type="binding site" evidence="1">
    <location>
        <position position="165"/>
    </location>
    <ligand>
        <name>anthranilate</name>
        <dbReference type="ChEBI" id="CHEBI:16567"/>
        <label>2</label>
    </ligand>
</feature>
<feature type="binding site" evidence="1">
    <location>
        <position position="223"/>
    </location>
    <ligand>
        <name>Mg(2+)</name>
        <dbReference type="ChEBI" id="CHEBI:18420"/>
        <label>2</label>
    </ligand>
</feature>
<feature type="binding site" evidence="1">
    <location>
        <position position="224"/>
    </location>
    <ligand>
        <name>Mg(2+)</name>
        <dbReference type="ChEBI" id="CHEBI:18420"/>
        <label>1</label>
    </ligand>
</feature>
<feature type="binding site" evidence="1">
    <location>
        <position position="224"/>
    </location>
    <ligand>
        <name>Mg(2+)</name>
        <dbReference type="ChEBI" id="CHEBI:18420"/>
        <label>2</label>
    </ligand>
</feature>
<reference key="1">
    <citation type="journal article" date="2009" name="Science">
        <title>The dynamics and time scale of ongoing genomic erosion in symbiotic bacteria.</title>
        <authorList>
            <person name="Moran N.A."/>
            <person name="McLaughlin H.J."/>
            <person name="Sorek R."/>
        </authorList>
    </citation>
    <scope>NUCLEOTIDE SEQUENCE [LARGE SCALE GENOMIC DNA]</scope>
    <source>
        <strain>Tuc7</strain>
    </source>
</reference>
<dbReference type="EC" id="2.4.2.18" evidence="1"/>
<dbReference type="EMBL" id="CP001158">
    <property type="protein sequence ID" value="ACL30091.1"/>
    <property type="molecule type" value="Genomic_DNA"/>
</dbReference>
<dbReference type="RefSeq" id="WP_012619489.1">
    <property type="nucleotide sequence ID" value="NC_011834.1"/>
</dbReference>
<dbReference type="SMR" id="B8D7H6"/>
<dbReference type="KEGG" id="bau:BUAPTUC7_277"/>
<dbReference type="HOGENOM" id="CLU_034315_3_0_6"/>
<dbReference type="UniPathway" id="UPA00035">
    <property type="reaction ID" value="UER00041"/>
</dbReference>
<dbReference type="GO" id="GO:0005829">
    <property type="term" value="C:cytosol"/>
    <property type="evidence" value="ECO:0007669"/>
    <property type="project" value="TreeGrafter"/>
</dbReference>
<dbReference type="GO" id="GO:0004048">
    <property type="term" value="F:anthranilate phosphoribosyltransferase activity"/>
    <property type="evidence" value="ECO:0007669"/>
    <property type="project" value="UniProtKB-UniRule"/>
</dbReference>
<dbReference type="GO" id="GO:0000287">
    <property type="term" value="F:magnesium ion binding"/>
    <property type="evidence" value="ECO:0007669"/>
    <property type="project" value="UniProtKB-UniRule"/>
</dbReference>
<dbReference type="GO" id="GO:0000162">
    <property type="term" value="P:L-tryptophan biosynthetic process"/>
    <property type="evidence" value="ECO:0007669"/>
    <property type="project" value="UniProtKB-UniRule"/>
</dbReference>
<dbReference type="FunFam" id="3.40.1030.10:FF:000002">
    <property type="entry name" value="Anthranilate phosphoribosyltransferase"/>
    <property type="match status" value="1"/>
</dbReference>
<dbReference type="Gene3D" id="3.40.1030.10">
    <property type="entry name" value="Nucleoside phosphorylase/phosphoribosyltransferase catalytic domain"/>
    <property type="match status" value="1"/>
</dbReference>
<dbReference type="Gene3D" id="1.20.970.10">
    <property type="entry name" value="Transferase, Pyrimidine Nucleoside Phosphorylase, Chain C"/>
    <property type="match status" value="1"/>
</dbReference>
<dbReference type="HAMAP" id="MF_00211">
    <property type="entry name" value="TrpD"/>
    <property type="match status" value="1"/>
</dbReference>
<dbReference type="InterPro" id="IPR005940">
    <property type="entry name" value="Anthranilate_Pribosyl_Tfrase"/>
</dbReference>
<dbReference type="InterPro" id="IPR000312">
    <property type="entry name" value="Glycosyl_Trfase_fam3"/>
</dbReference>
<dbReference type="InterPro" id="IPR017459">
    <property type="entry name" value="Glycosyl_Trfase_fam3_N_dom"/>
</dbReference>
<dbReference type="InterPro" id="IPR036320">
    <property type="entry name" value="Glycosyl_Trfase_fam3_N_dom_sf"/>
</dbReference>
<dbReference type="InterPro" id="IPR035902">
    <property type="entry name" value="Nuc_phospho_transferase"/>
</dbReference>
<dbReference type="NCBIfam" id="TIGR01245">
    <property type="entry name" value="trpD"/>
    <property type="match status" value="1"/>
</dbReference>
<dbReference type="PANTHER" id="PTHR43285">
    <property type="entry name" value="ANTHRANILATE PHOSPHORIBOSYLTRANSFERASE"/>
    <property type="match status" value="1"/>
</dbReference>
<dbReference type="PANTHER" id="PTHR43285:SF2">
    <property type="entry name" value="ANTHRANILATE PHOSPHORIBOSYLTRANSFERASE"/>
    <property type="match status" value="1"/>
</dbReference>
<dbReference type="Pfam" id="PF02885">
    <property type="entry name" value="Glycos_trans_3N"/>
    <property type="match status" value="1"/>
</dbReference>
<dbReference type="Pfam" id="PF00591">
    <property type="entry name" value="Glycos_transf_3"/>
    <property type="match status" value="1"/>
</dbReference>
<dbReference type="SUPFAM" id="SSF52418">
    <property type="entry name" value="Nucleoside phosphorylase/phosphoribosyltransferase catalytic domain"/>
    <property type="match status" value="1"/>
</dbReference>
<dbReference type="SUPFAM" id="SSF47648">
    <property type="entry name" value="Nucleoside phosphorylase/phosphoribosyltransferase N-terminal domain"/>
    <property type="match status" value="1"/>
</dbReference>
<gene>
    <name evidence="1" type="primary">trpD</name>
    <name type="ordered locus">BUAPTUC7_277</name>
</gene>
<keyword id="KW-0028">Amino-acid biosynthesis</keyword>
<keyword id="KW-0057">Aromatic amino acid biosynthesis</keyword>
<keyword id="KW-0328">Glycosyltransferase</keyword>
<keyword id="KW-0460">Magnesium</keyword>
<keyword id="KW-0479">Metal-binding</keyword>
<keyword id="KW-0808">Transferase</keyword>
<keyword id="KW-0822">Tryptophan biosynthesis</keyword>
<organism>
    <name type="scientific">Buchnera aphidicola subsp. Acyrthosiphon pisum (strain Tuc7)</name>
    <dbReference type="NCBI Taxonomy" id="561501"/>
    <lineage>
        <taxon>Bacteria</taxon>
        <taxon>Pseudomonadati</taxon>
        <taxon>Pseudomonadota</taxon>
        <taxon>Gammaproteobacteria</taxon>
        <taxon>Enterobacterales</taxon>
        <taxon>Erwiniaceae</taxon>
        <taxon>Buchnera</taxon>
    </lineage>
</organism>